<name>Y2233_BACC1</name>
<protein>
    <recommendedName>
        <fullName evidence="1">Bacilliredoxin BCE_2233</fullName>
    </recommendedName>
</protein>
<evidence type="ECO:0000305" key="1"/>
<gene>
    <name type="ordered locus">BCE_2233</name>
</gene>
<sequence>MSNAYEEYMRQMVIPMRQELVRSGFEELTTEEAVTEFIENTTGTTLVVVNSVCGCAAGLARPSAGQAVVRAEKQPDHLVTVFAGQDKDATAKMREYFGEIPPSSPSMALLKGKEVVHFIHRHEIEGATMDEIITNLEQAFEKNC</sequence>
<feature type="chain" id="PRO_0000271975" description="Bacilliredoxin BCE_2233">
    <location>
        <begin position="1"/>
        <end position="144"/>
    </location>
</feature>
<comment type="similarity">
    <text evidence="1">Belongs to the bacilliredoxin family.</text>
</comment>
<proteinExistence type="inferred from homology"/>
<accession>Q739A9</accession>
<organism>
    <name type="scientific">Bacillus cereus (strain ATCC 10987 / NRS 248)</name>
    <dbReference type="NCBI Taxonomy" id="222523"/>
    <lineage>
        <taxon>Bacteria</taxon>
        <taxon>Bacillati</taxon>
        <taxon>Bacillota</taxon>
        <taxon>Bacilli</taxon>
        <taxon>Bacillales</taxon>
        <taxon>Bacillaceae</taxon>
        <taxon>Bacillus</taxon>
        <taxon>Bacillus cereus group</taxon>
    </lineage>
</organism>
<dbReference type="EMBL" id="AE017194">
    <property type="protein sequence ID" value="AAS41153.1"/>
    <property type="molecule type" value="Genomic_DNA"/>
</dbReference>
<dbReference type="SMR" id="Q739A9"/>
<dbReference type="KEGG" id="bca:BCE_2233"/>
<dbReference type="HOGENOM" id="CLU_132521_0_0_9"/>
<dbReference type="Proteomes" id="UP000002527">
    <property type="component" value="Chromosome"/>
</dbReference>
<dbReference type="GO" id="GO:0045454">
    <property type="term" value="P:cell redox homeostasis"/>
    <property type="evidence" value="ECO:0000250"/>
    <property type="project" value="UniProtKB"/>
</dbReference>
<dbReference type="Gene3D" id="6.10.250.2150">
    <property type="match status" value="1"/>
</dbReference>
<dbReference type="Gene3D" id="3.40.30.10">
    <property type="entry name" value="Glutaredoxin"/>
    <property type="match status" value="1"/>
</dbReference>
<dbReference type="InterPro" id="IPR009474">
    <property type="entry name" value="BrxB/BrxA"/>
</dbReference>
<dbReference type="NCBIfam" id="TIGR04191">
    <property type="entry name" value="YphP_YqiW"/>
    <property type="match status" value="1"/>
</dbReference>
<dbReference type="PANTHER" id="PTHR40052:SF2">
    <property type="entry name" value="BACILLIREDOXIN BRXA"/>
    <property type="match status" value="1"/>
</dbReference>
<dbReference type="PANTHER" id="PTHR40052">
    <property type="entry name" value="UPF0403 PROTEIN YQIW-RELATED"/>
    <property type="match status" value="1"/>
</dbReference>
<dbReference type="Pfam" id="PF06491">
    <property type="entry name" value="Disulph_isomer"/>
    <property type="match status" value="1"/>
</dbReference>
<reference key="1">
    <citation type="journal article" date="2004" name="Nucleic Acids Res.">
        <title>The genome sequence of Bacillus cereus ATCC 10987 reveals metabolic adaptations and a large plasmid related to Bacillus anthracis pXO1.</title>
        <authorList>
            <person name="Rasko D.A."/>
            <person name="Ravel J."/>
            <person name="Oekstad O.A."/>
            <person name="Helgason E."/>
            <person name="Cer R.Z."/>
            <person name="Jiang L."/>
            <person name="Shores K.A."/>
            <person name="Fouts D.E."/>
            <person name="Tourasse N.J."/>
            <person name="Angiuoli S.V."/>
            <person name="Kolonay J.F."/>
            <person name="Nelson W.C."/>
            <person name="Kolstoe A.-B."/>
            <person name="Fraser C.M."/>
            <person name="Read T.D."/>
        </authorList>
    </citation>
    <scope>NUCLEOTIDE SEQUENCE [LARGE SCALE GENOMIC DNA]</scope>
    <source>
        <strain>ATCC 10987 / NRS 248</strain>
    </source>
</reference>